<reference key="1">
    <citation type="journal article" date="2000" name="J. Exp. Med.">
        <title>Engagement of the PD-1 immunoinhibitory receptor by a novel B7-family member leads to negative regulation of lymphocyte activation.</title>
        <authorList>
            <person name="Freeman G.J."/>
            <person name="Long A.J."/>
            <person name="Iwai Y."/>
            <person name="Bourque K."/>
            <person name="Chernova T."/>
            <person name="Nishimura H."/>
            <person name="Fitz L.J."/>
            <person name="Malenkovich N."/>
            <person name="Okazaki T."/>
            <person name="Byrne M.C."/>
            <person name="Horton H.F."/>
            <person name="Fouser L."/>
            <person name="Carter L."/>
            <person name="Ling V."/>
            <person name="Bowman M.R."/>
            <person name="Carreno B.M."/>
            <person name="Collins M."/>
            <person name="Wood C.R."/>
            <person name="Honjo T."/>
        </authorList>
    </citation>
    <scope>NUCLEOTIDE SEQUENCE [MRNA]</scope>
    <scope>FUNCTION</scope>
    <scope>INTERACTION WITH PDCD1</scope>
    <scope>TISSUE SPECIFICITY</scope>
    <scope>INDUCTION</scope>
    <source>
        <tissue>Spleen</tissue>
    </source>
</reference>
<reference key="2">
    <citation type="journal article" date="2001" name="Blood">
        <title>B7-H1 costimulation preferentially enhances CD28-independent T-helper cell function.</title>
        <authorList>
            <person name="Tamura H."/>
            <person name="Dong H."/>
            <person name="Zhu G."/>
            <person name="Sica G.L."/>
            <person name="Flies D.B."/>
            <person name="Tamada K."/>
            <person name="Chen L."/>
        </authorList>
    </citation>
    <scope>NUCLEOTIDE SEQUENCE [MRNA]</scope>
    <scope>FUNCTION</scope>
    <scope>TISSUE SPECIFICITY</scope>
    <scope>INDUCTION</scope>
    <source>
        <strain>C57BL/6J</strain>
    </source>
</reference>
<reference key="3">
    <citation type="journal article" date="2004" name="Genome Res.">
        <title>The status, quality, and expansion of the NIH full-length cDNA project: the Mammalian Gene Collection (MGC).</title>
        <authorList>
            <consortium name="The MGC Project Team"/>
        </authorList>
    </citation>
    <scope>NUCLEOTIDE SEQUENCE [LARGE SCALE MRNA]</scope>
    <source>
        <strain>CD-1</strain>
        <tissue>Neural stem cell</tissue>
    </source>
</reference>
<reference key="4">
    <citation type="journal article" date="2001" name="Nat. Immunol.">
        <title>PD-L2 is a second ligand for PD-1 and inhibits T cell activation.</title>
        <authorList>
            <person name="Latchman Y."/>
            <person name="Wood C.R."/>
            <person name="Chernova T."/>
            <person name="Chaudhary D."/>
            <person name="Borde M."/>
            <person name="Chernova I."/>
            <person name="Iwai Y."/>
            <person name="Long A.J."/>
            <person name="Brown J.A."/>
            <person name="Nunes R."/>
            <person name="Greenfield E.A."/>
            <person name="Bourque K."/>
            <person name="Boussiotis V.A."/>
            <person name="Carter L.L."/>
            <person name="Carreno B.M."/>
            <person name="Malenkovich N."/>
            <person name="Nishimura H."/>
            <person name="Okazaki T."/>
            <person name="Honjo T."/>
            <person name="Sharpe A.H."/>
            <person name="Freeman G.J."/>
        </authorList>
    </citation>
    <scope>TISSUE SPECIFICITY</scope>
</reference>
<reference key="5">
    <citation type="journal article" date="2002" name="Proc. Natl. Acad. Sci. U.S.A.">
        <title>Involvement of PD-L1 on tumor cells in the escape from host immune system and tumor immunotherapy by PD-L1 blockade.</title>
        <authorList>
            <person name="Iwai Y."/>
            <person name="Ishida M."/>
            <person name="Tanaka Y."/>
            <person name="Okazaki T."/>
            <person name="Honjo T."/>
            <person name="Minato N."/>
        </authorList>
    </citation>
    <scope>FUNCTION</scope>
</reference>
<reference key="6">
    <citation type="journal article" date="2003" name="J. Exp. Med.">
        <title>Molecular modeling and functional mapping of B7-H1 and B7-DC uncouple costimulatory function from PD-1 interaction.</title>
        <authorList>
            <person name="Wang S."/>
            <person name="Bajorath J."/>
            <person name="Flies D.B."/>
            <person name="Dong H."/>
            <person name="Honjo T."/>
            <person name="Chen L."/>
        </authorList>
    </citation>
    <scope>FUNCTION</scope>
    <scope>MUTAGENESIS OF LEU-27; GLU-31; SER-34; THR-37; ASP-49; TYR-56; GLU-58; GLU-62; PHE-67; ALA-69; GLU-72; LYS-75; LYS-89; ALA-98; CYS-113; ILE-115; SER-117; LYS-124; ILE-126 AND LYS-129</scope>
</reference>
<reference key="7">
    <citation type="journal article" date="2016" name="Nature">
        <title>Aberrant PD-L1 expression through 3'-UTR disruption in multiple cancers.</title>
        <authorList>
            <person name="Kataoka K."/>
            <person name="Shiraishi Y."/>
            <person name="Takeda Y."/>
            <person name="Sakata S."/>
            <person name="Matsumoto M."/>
            <person name="Nagano S."/>
            <person name="Maeda T."/>
            <person name="Nagata Y."/>
            <person name="Kitanaka A."/>
            <person name="Mizuno S."/>
            <person name="Tanaka H."/>
            <person name="Chiba K."/>
            <person name="Ito S."/>
            <person name="Watatani Y."/>
            <person name="Kakiuchi N."/>
            <person name="Suzuki H."/>
            <person name="Yoshizato T."/>
            <person name="Yoshida K."/>
            <person name="Sanada M."/>
            <person name="Itonaga H."/>
            <person name="Imaizumi Y."/>
            <person name="Totoki Y."/>
            <person name="Munakata W."/>
            <person name="Nakamura H."/>
            <person name="Hama N."/>
            <person name="Shide K."/>
            <person name="Kubuki Y."/>
            <person name="Hidaka T."/>
            <person name="Kameda T."/>
            <person name="Masuda K."/>
            <person name="Minato N."/>
            <person name="Kashiwase K."/>
            <person name="Izutsu K."/>
            <person name="Takaori-Kondo A."/>
            <person name="Miyazaki Y."/>
            <person name="Takahashi S."/>
            <person name="Shibata T."/>
            <person name="Kawamoto H."/>
            <person name="Akatsuka Y."/>
            <person name="Shimoda K."/>
            <person name="Takeuchi K."/>
            <person name="Seya T."/>
            <person name="Miyano S."/>
            <person name="Ogawa S."/>
        </authorList>
    </citation>
    <scope>FUNCTION</scope>
</reference>
<accession>Q9EP73</accession>
<organism>
    <name type="scientific">Mus musculus</name>
    <name type="common">Mouse</name>
    <dbReference type="NCBI Taxonomy" id="10090"/>
    <lineage>
        <taxon>Eukaryota</taxon>
        <taxon>Metazoa</taxon>
        <taxon>Chordata</taxon>
        <taxon>Craniata</taxon>
        <taxon>Vertebrata</taxon>
        <taxon>Euteleostomi</taxon>
        <taxon>Mammalia</taxon>
        <taxon>Eutheria</taxon>
        <taxon>Euarchontoglires</taxon>
        <taxon>Glires</taxon>
        <taxon>Rodentia</taxon>
        <taxon>Myomorpha</taxon>
        <taxon>Muroidea</taxon>
        <taxon>Muridae</taxon>
        <taxon>Murinae</taxon>
        <taxon>Mus</taxon>
        <taxon>Mus</taxon>
    </lineage>
</organism>
<proteinExistence type="evidence at protein level"/>
<feature type="signal peptide" evidence="2">
    <location>
        <begin position="1"/>
        <end position="18"/>
    </location>
</feature>
<feature type="chain" id="PRO_0000014554" description="Programmed cell death 1 ligand 1">
    <location>
        <begin position="19"/>
        <end position="290"/>
    </location>
</feature>
<feature type="topological domain" description="Extracellular" evidence="2">
    <location>
        <begin position="19"/>
        <end position="239"/>
    </location>
</feature>
<feature type="transmembrane region" description="Helical" evidence="2">
    <location>
        <begin position="240"/>
        <end position="260"/>
    </location>
</feature>
<feature type="topological domain" description="Cytoplasmic" evidence="2">
    <location>
        <begin position="261"/>
        <end position="290"/>
    </location>
</feature>
<feature type="domain" description="Ig-like V-type">
    <location>
        <begin position="19"/>
        <end position="127"/>
    </location>
</feature>
<feature type="domain" description="Ig-like C2-type">
    <location>
        <begin position="133"/>
        <end position="224"/>
    </location>
</feature>
<feature type="glycosylation site" description="N-linked (GlcNAc...) asparagine" evidence="2">
    <location>
        <position position="35"/>
    </location>
</feature>
<feature type="glycosylation site" description="N-linked (GlcNAc...) asparagine" evidence="2">
    <location>
        <position position="191"/>
    </location>
</feature>
<feature type="glycosylation site" description="N-linked (GlcNAc...) asparagine" evidence="2">
    <location>
        <position position="199"/>
    </location>
</feature>
<feature type="glycosylation site" description="N-linked (GlcNAc...) asparagine" evidence="2">
    <location>
        <position position="218"/>
    </location>
</feature>
<feature type="glycosylation site" description="N-linked (GlcNAc...) asparagine" evidence="2">
    <location>
        <position position="236"/>
    </location>
</feature>
<feature type="disulfide bond" evidence="3">
    <location>
        <begin position="40"/>
        <end position="114"/>
    </location>
</feature>
<feature type="disulfide bond" evidence="3">
    <location>
        <begin position="154"/>
        <end position="208"/>
    </location>
</feature>
<feature type="mutagenesis site" description="PDCD1 binding." evidence="8">
    <original>L</original>
    <variation>A</variation>
    <location>
        <position position="27"/>
    </location>
</feature>
<feature type="mutagenesis site" description="Significantly reduces the binding to PDCD1." evidence="8">
    <original>E</original>
    <variation>S</variation>
    <location>
        <position position="31"/>
    </location>
</feature>
<feature type="mutagenesis site" description="No effect on PDCD1 binding." evidence="8">
    <original>S</original>
    <variation>Y</variation>
    <location>
        <position position="34"/>
    </location>
</feature>
<feature type="mutagenesis site" description="Significantly reduces the binding to PDCD1." evidence="8">
    <original>T</original>
    <variation>Y</variation>
    <location>
        <position position="37"/>
    </location>
</feature>
<feature type="mutagenesis site" description="No effect on PDCD1 binding." evidence="8">
    <original>D</original>
    <variation>S</variation>
    <location>
        <position position="49"/>
    </location>
</feature>
<feature type="mutagenesis site" description="No effect on PDCD1 binding." evidence="8">
    <original>Y</original>
    <variation>S</variation>
    <location>
        <position position="56"/>
    </location>
</feature>
<feature type="mutagenesis site" description="No effect on PDCD1 binding." evidence="8">
    <original>E</original>
    <variation>S</variation>
    <location>
        <position position="58"/>
    </location>
</feature>
<feature type="mutagenesis site" description="No effect on PDCD1 binding." evidence="8">
    <original>E</original>
    <variation>S</variation>
    <location>
        <position position="62"/>
    </location>
</feature>
<feature type="mutagenesis site" description="Abolishes the binding to PDCD1. Costimulates proliferation and IFNG production of T-cells." evidence="8">
    <original>F</original>
    <variation>A</variation>
    <location>
        <position position="67"/>
    </location>
</feature>
<feature type="mutagenesis site" description="No effect on PDCD1 binding." evidence="8">
    <original>A</original>
    <variation>F</variation>
    <location>
        <position position="69"/>
    </location>
</feature>
<feature type="mutagenesis site" description="No effect on PDCD1 binding." evidence="8">
    <original>E</original>
    <variation>S</variation>
    <location>
        <position position="72"/>
    </location>
</feature>
<feature type="mutagenesis site" description="No effect on PDCD1 binding." evidence="8">
    <original>K</original>
    <variation>S</variation>
    <location>
        <position position="75"/>
    </location>
</feature>
<feature type="mutagenesis site" description="No effect on PDCD1 binding." evidence="8">
    <original>K</original>
    <variation>S</variation>
    <location>
        <position position="89"/>
    </location>
</feature>
<feature type="mutagenesis site" description="No effect on PDCD1 binding." evidence="8">
    <original>A</original>
    <variation>F</variation>
    <location>
        <position position="98"/>
    </location>
</feature>
<feature type="mutagenesis site" description="No effect on PDCD1 binding.">
    <original>Q</original>
    <variation>S</variation>
    <location>
        <position position="100"/>
    </location>
</feature>
<feature type="mutagenesis site" description="No effect on PDCD1 binding." evidence="8">
    <original>C</original>
    <variation>Y</variation>
    <location>
        <position position="113"/>
    </location>
</feature>
<feature type="mutagenesis site" description="Abolishes the binding to PDCD1." evidence="8">
    <original>I</original>
    <variation>A</variation>
    <location>
        <position position="115"/>
    </location>
</feature>
<feature type="mutagenesis site" description="No effect on PDCD1 binding." evidence="8">
    <original>S</original>
    <variation>Y</variation>
    <location>
        <position position="117"/>
    </location>
</feature>
<feature type="mutagenesis site" description="Abolishes the binding to PDCD1." evidence="8">
    <original>K</original>
    <variation>A</variation>
    <location>
        <position position="124"/>
    </location>
</feature>
<feature type="mutagenesis site" description="Abolishes the binding to PDCD1. Costimulates proliferation and IFNG production of T-cells." evidence="8">
    <original>I</original>
    <variation>A</variation>
    <location>
        <position position="126"/>
    </location>
</feature>
<feature type="mutagenesis site" description="Abolishes the binding to PDCD1." evidence="8">
    <original>K</original>
    <variation>S</variation>
    <location>
        <position position="129"/>
    </location>
</feature>
<feature type="strand" evidence="11">
    <location>
        <begin position="26"/>
        <end position="31"/>
    </location>
</feature>
<feature type="strand" evidence="11">
    <location>
        <begin position="36"/>
        <end position="38"/>
    </location>
</feature>
<feature type="helix" evidence="11">
    <location>
        <begin position="50"/>
        <end position="52"/>
    </location>
</feature>
<feature type="strand" evidence="11">
    <location>
        <begin position="54"/>
        <end position="61"/>
    </location>
</feature>
<feature type="strand" evidence="11">
    <location>
        <begin position="63"/>
        <end position="68"/>
    </location>
</feature>
<feature type="strand" evidence="11">
    <location>
        <begin position="71"/>
        <end position="73"/>
    </location>
</feature>
<feature type="turn" evidence="11">
    <location>
        <begin position="80"/>
        <end position="84"/>
    </location>
</feature>
<feature type="helix" evidence="11">
    <location>
        <begin position="89"/>
        <end position="92"/>
    </location>
</feature>
<feature type="turn" evidence="11">
    <location>
        <begin position="93"/>
        <end position="95"/>
    </location>
</feature>
<feature type="strand" evidence="11">
    <location>
        <begin position="99"/>
        <end position="101"/>
    </location>
</feature>
<feature type="helix" evidence="11">
    <location>
        <begin position="106"/>
        <end position="108"/>
    </location>
</feature>
<feature type="strand" evidence="11">
    <location>
        <begin position="110"/>
        <end position="131"/>
    </location>
</feature>
<protein>
    <recommendedName>
        <fullName>Programmed cell death 1 ligand 1</fullName>
        <shortName>PD-L1</shortName>
        <shortName>PDCD1 ligand 1</shortName>
        <shortName>Programmed death ligand 1</shortName>
    </recommendedName>
    <alternativeName>
        <fullName>B7 homolog 1</fullName>
        <shortName>B7-H1</shortName>
    </alternativeName>
    <cdAntigenName>CD274</cdAntigenName>
</protein>
<comment type="function">
    <text evidence="4 6 8">Plays a critical role in induction and maintenance of immune tolerance to self (PubMed:11238124). As a ligand for the inhibitory receptor PDCD1/PD-1, modulates the activation threshold of T-cells and limits T-cell effector response (PubMed:11238124). Through a yet unknown activating receptor, may costimulate T-cell subsets that predominantly produce interleukin-10 (IL10) (PubMed:11015443, PubMed:12719480).</text>
</comment>
<comment type="function">
    <text evidence="7 9">The PDCD1-mediated inhibitory pathway is exploited by tumors to attenuate anti-tumor immunity and escape destruction by the immune system, thereby facilitating tumor survival (PubMed:12218188, PubMed:27281199). The interaction with PDCD1/PD-1 inhibits cytotoxic T lymphocytes (CTLs) effector function (PubMed:12218188). The blockage of the PDCD1-mediated pathway results in the reversal of the exhausted T-cell phenotype and the normalization of the anti-tumor response, providing a rationale for cancer immunotherapy (PubMed:12218188).</text>
</comment>
<comment type="subunit">
    <text evidence="1 4">Interacts with PDCD1 (PubMed:11015443). Interacts with CMTM4 and CMTM6 (By similarity). Interacts with CD80 (By similarity).</text>
</comment>
<comment type="interaction">
    <interactant intactId="EBI-5258879">
        <id>Q9EP73</id>
    </interactant>
    <interactant intactId="EBI-5258929">
        <id>Q00609</id>
        <label>Cd80</label>
    </interactant>
    <organismsDiffer>false</organismsDiffer>
    <experiments>7</experiments>
</comment>
<comment type="interaction">
    <interactant intactId="EBI-5258879">
        <id>Q9EP73</id>
    </interactant>
    <interactant intactId="EBI-5258903">
        <id>Q02242</id>
        <label>Pdcd1</label>
    </interactant>
    <organismsDiffer>false</organismsDiffer>
    <experiments>3</experiments>
</comment>
<comment type="subcellular location">
    <subcellularLocation>
        <location evidence="1">Cell membrane</location>
        <topology evidence="2">Single-pass type I membrane protein</topology>
    </subcellularLocation>
    <subcellularLocation>
        <location evidence="1">Early endosome membrane</location>
        <topology evidence="2">Single-pass type I membrane protein</topology>
    </subcellularLocation>
    <subcellularLocation>
        <location evidence="1">Recycling endosome membrane</location>
        <topology evidence="2">Single-pass type I membrane protein</topology>
    </subcellularLocation>
</comment>
<comment type="tissue specificity">
    <text evidence="4 5 6">Highly expressed in the heart, thymus, skeletal muscle, and lung. Weakly expressed in the kidney, spleen, thyroid, and liver. Expressed on activated dendritic cells, B-cells and macrophages. Expressed in numerous tumor cells lines of lymphoid origin.</text>
</comment>
<comment type="induction">
    <text evidence="4 6">Up-regulated by IFNG treatment in monocytes. Up-regulated on dendritic cells, B-cells and macrophages after activation by LPS and IFNG.</text>
</comment>
<comment type="PTM">
    <text evidence="1">Ubiquitinated; STUB1 likely mediates polyubiquitination of PD-L1/CD274 triggering its degradation. Ubiquitinated by MARCHF8; leading to degradation. Deubiquitinated by USP22; leading to stabilization.</text>
</comment>
<comment type="similarity">
    <text evidence="10">Belongs to the immunoglobulin superfamily. BTN/MOG family.</text>
</comment>
<sequence length="290" mass="32780">MRIFAGIIFTACCHLLRAFTITAPKDLYVVEYGSNVTMECRFPVERELDLLALVVYWEKEDEQVIQFVAGEEDLKPQHSNFRGRASLPKDQLLKGNAALQITDVKLQDAGVYCCIISYGGADYKRITLKVNAPYRKINQRISVDPATSEHELICQAEGYPEAEVIWTNSDHQPVSGKRSVTTSRTEGMLLNVTSSLRVNATANDVFYCTFWRSQPGQNHTAELIIPELPATHPPQNRTHWVLLGSILLFLIVVSTVLLFLRKQVRMLDVEKCGVEDTSSKNRNDTQFEET</sequence>
<gene>
    <name type="primary">Cd274</name>
    <name type="synonym">B7h1</name>
    <name type="synonym">Pdcd1l1</name>
    <name type="synonym">Pdcd1lg1</name>
    <name type="synonym">Pdl1</name>
</gene>
<evidence type="ECO:0000250" key="1">
    <source>
        <dbReference type="UniProtKB" id="Q9NZQ7"/>
    </source>
</evidence>
<evidence type="ECO:0000255" key="2"/>
<evidence type="ECO:0000255" key="3">
    <source>
        <dbReference type="PROSITE-ProRule" id="PRU00114"/>
    </source>
</evidence>
<evidence type="ECO:0000269" key="4">
    <source>
    </source>
</evidence>
<evidence type="ECO:0000269" key="5">
    <source>
    </source>
</evidence>
<evidence type="ECO:0000269" key="6">
    <source>
    </source>
</evidence>
<evidence type="ECO:0000269" key="7">
    <source>
    </source>
</evidence>
<evidence type="ECO:0000269" key="8">
    <source>
    </source>
</evidence>
<evidence type="ECO:0000269" key="9">
    <source>
    </source>
</evidence>
<evidence type="ECO:0000305" key="10"/>
<evidence type="ECO:0007829" key="11">
    <source>
        <dbReference type="PDB" id="6SRU"/>
    </source>
</evidence>
<keyword id="KW-0002">3D-structure</keyword>
<keyword id="KW-1064">Adaptive immunity</keyword>
<keyword id="KW-1003">Cell membrane</keyword>
<keyword id="KW-1015">Disulfide bond</keyword>
<keyword id="KW-0967">Endosome</keyword>
<keyword id="KW-0325">Glycoprotein</keyword>
<keyword id="KW-0391">Immunity</keyword>
<keyword id="KW-0393">Immunoglobulin domain</keyword>
<keyword id="KW-0472">Membrane</keyword>
<keyword id="KW-0675">Receptor</keyword>
<keyword id="KW-1185">Reference proteome</keyword>
<keyword id="KW-0677">Repeat</keyword>
<keyword id="KW-0732">Signal</keyword>
<keyword id="KW-0812">Transmembrane</keyword>
<keyword id="KW-1133">Transmembrane helix</keyword>
<keyword id="KW-0832">Ubl conjugation</keyword>
<name>PD1L1_MOUSE</name>
<dbReference type="EMBL" id="AF233517">
    <property type="protein sequence ID" value="AAG18509.1"/>
    <property type="molecule type" value="mRNA"/>
</dbReference>
<dbReference type="EMBL" id="AF317088">
    <property type="protein sequence ID" value="AAG31810.1"/>
    <property type="molecule type" value="mRNA"/>
</dbReference>
<dbReference type="EMBL" id="BC066841">
    <property type="protein sequence ID" value="AAH66841.1"/>
    <property type="molecule type" value="mRNA"/>
</dbReference>
<dbReference type="CCDS" id="CCDS29735.1"/>
<dbReference type="RefSeq" id="NP_068693.1">
    <property type="nucleotide sequence ID" value="NM_021893.3"/>
</dbReference>
<dbReference type="RefSeq" id="XP_030106880.1">
    <property type="nucleotide sequence ID" value="XM_030251020.2"/>
</dbReference>
<dbReference type="PDB" id="6SRU">
    <property type="method" value="X-ray"/>
    <property type="resolution" value="2.53 A"/>
    <property type="chains" value="A/B/C/D/E/F/G/H/I/J=19-134"/>
</dbReference>
<dbReference type="PDBsum" id="6SRU"/>
<dbReference type="SMR" id="Q9EP73"/>
<dbReference type="BioGRID" id="208602">
    <property type="interactions" value="18"/>
</dbReference>
<dbReference type="DIP" id="DIP-46167N"/>
<dbReference type="FunCoup" id="Q9EP73">
    <property type="interactions" value="395"/>
</dbReference>
<dbReference type="IntAct" id="Q9EP73">
    <property type="interactions" value="2"/>
</dbReference>
<dbReference type="STRING" id="10090.ENSMUSP00000016640"/>
<dbReference type="BindingDB" id="Q9EP73"/>
<dbReference type="ChEMBL" id="CHEMBL4523448"/>
<dbReference type="GlyCosmos" id="Q9EP73">
    <property type="glycosylation" value="5 sites, No reported glycans"/>
</dbReference>
<dbReference type="GlyGen" id="Q9EP73">
    <property type="glycosylation" value="6 sites, 4 N-linked glycans (4 sites)"/>
</dbReference>
<dbReference type="iPTMnet" id="Q9EP73"/>
<dbReference type="PhosphoSitePlus" id="Q9EP73"/>
<dbReference type="SwissPalm" id="Q9EP73"/>
<dbReference type="PaxDb" id="10090-ENSMUSP00000016640"/>
<dbReference type="ProteomicsDB" id="289330"/>
<dbReference type="ABCD" id="Q9EP73">
    <property type="antibodies" value="66 sequenced antibodies"/>
</dbReference>
<dbReference type="Antibodypedia" id="24139">
    <property type="antibodies" value="2465 antibodies from 56 providers"/>
</dbReference>
<dbReference type="DNASU" id="60533"/>
<dbReference type="Ensembl" id="ENSMUST00000016640.8">
    <property type="protein sequence ID" value="ENSMUSP00000016640.8"/>
    <property type="gene ID" value="ENSMUSG00000016496.8"/>
</dbReference>
<dbReference type="GeneID" id="60533"/>
<dbReference type="KEGG" id="mmu:60533"/>
<dbReference type="UCSC" id="uc008hdi.2">
    <property type="organism name" value="mouse"/>
</dbReference>
<dbReference type="AGR" id="MGI:1926446"/>
<dbReference type="CTD" id="29126"/>
<dbReference type="MGI" id="MGI:1926446">
    <property type="gene designation" value="Cd274"/>
</dbReference>
<dbReference type="VEuPathDB" id="HostDB:ENSMUSG00000016496"/>
<dbReference type="eggNOG" id="ENOG502S1Y9">
    <property type="taxonomic scope" value="Eukaryota"/>
</dbReference>
<dbReference type="GeneTree" id="ENSGT00940000161430"/>
<dbReference type="HOGENOM" id="CLU_013137_8_3_1"/>
<dbReference type="InParanoid" id="Q9EP73"/>
<dbReference type="OMA" id="YCCMISY"/>
<dbReference type="OrthoDB" id="8680608at2759"/>
<dbReference type="PhylomeDB" id="Q9EP73"/>
<dbReference type="TreeFam" id="TF331083"/>
<dbReference type="Reactome" id="R-MMU-389948">
    <property type="pathway name" value="Co-inhibition by PD-1"/>
</dbReference>
<dbReference type="BioGRID-ORCS" id="60533">
    <property type="hits" value="7 hits in 86 CRISPR screens"/>
</dbReference>
<dbReference type="ChiTaRS" id="Cd274">
    <property type="organism name" value="mouse"/>
</dbReference>
<dbReference type="PRO" id="PR:Q9EP73"/>
<dbReference type="Proteomes" id="UP000000589">
    <property type="component" value="Chromosome 19"/>
</dbReference>
<dbReference type="RNAct" id="Q9EP73">
    <property type="molecule type" value="protein"/>
</dbReference>
<dbReference type="Bgee" id="ENSMUSG00000016496">
    <property type="expression patterns" value="Expressed in mesenteric lymph node and 102 other cell types or tissues"/>
</dbReference>
<dbReference type="ExpressionAtlas" id="Q9EP73">
    <property type="expression patterns" value="baseline and differential"/>
</dbReference>
<dbReference type="GO" id="GO:0015629">
    <property type="term" value="C:actin cytoskeleton"/>
    <property type="evidence" value="ECO:0007669"/>
    <property type="project" value="Ensembl"/>
</dbReference>
<dbReference type="GO" id="GO:0031901">
    <property type="term" value="C:early endosome membrane"/>
    <property type="evidence" value="ECO:0000250"/>
    <property type="project" value="UniProtKB"/>
</dbReference>
<dbReference type="GO" id="GO:0009897">
    <property type="term" value="C:external side of plasma membrane"/>
    <property type="evidence" value="ECO:0000314"/>
    <property type="project" value="MGI"/>
</dbReference>
<dbReference type="GO" id="GO:0070062">
    <property type="term" value="C:extracellular exosome"/>
    <property type="evidence" value="ECO:0007669"/>
    <property type="project" value="Ensembl"/>
</dbReference>
<dbReference type="GO" id="GO:0005654">
    <property type="term" value="C:nucleoplasm"/>
    <property type="evidence" value="ECO:0007669"/>
    <property type="project" value="Ensembl"/>
</dbReference>
<dbReference type="GO" id="GO:0055038">
    <property type="term" value="C:recycling endosome membrane"/>
    <property type="evidence" value="ECO:0000250"/>
    <property type="project" value="UniProtKB"/>
</dbReference>
<dbReference type="GO" id="GO:0048018">
    <property type="term" value="F:receptor ligand activity"/>
    <property type="evidence" value="ECO:0007669"/>
    <property type="project" value="Ensembl"/>
</dbReference>
<dbReference type="GO" id="GO:0003713">
    <property type="term" value="F:transcription coactivator activity"/>
    <property type="evidence" value="ECO:0007669"/>
    <property type="project" value="Ensembl"/>
</dbReference>
<dbReference type="GO" id="GO:0002250">
    <property type="term" value="P:adaptive immune response"/>
    <property type="evidence" value="ECO:0007669"/>
    <property type="project" value="UniProtKB-KW"/>
</dbReference>
<dbReference type="GO" id="GO:0007166">
    <property type="term" value="P:cell surface receptor signaling pathway"/>
    <property type="evidence" value="ECO:0007669"/>
    <property type="project" value="Ensembl"/>
</dbReference>
<dbReference type="GO" id="GO:0046007">
    <property type="term" value="P:negative regulation of activated T cell proliferation"/>
    <property type="evidence" value="ECO:0007669"/>
    <property type="project" value="Ensembl"/>
</dbReference>
<dbReference type="GO" id="GO:2000562">
    <property type="term" value="P:negative regulation of CD4-positive, alpha-beta T cell proliferation"/>
    <property type="evidence" value="ECO:0007669"/>
    <property type="project" value="Ensembl"/>
</dbReference>
<dbReference type="GO" id="GO:2001186">
    <property type="term" value="P:negative regulation of CD8-positive, alpha-beta T cell activation"/>
    <property type="evidence" value="ECO:0000250"/>
    <property type="project" value="UniProtKB"/>
</dbReference>
<dbReference type="GO" id="GO:0032693">
    <property type="term" value="P:negative regulation of interleukin-10 production"/>
    <property type="evidence" value="ECO:0007669"/>
    <property type="project" value="Ensembl"/>
</dbReference>
<dbReference type="GO" id="GO:0002841">
    <property type="term" value="P:negative regulation of T cell mediated immune response to tumor cell"/>
    <property type="evidence" value="ECO:0000250"/>
    <property type="project" value="UniProtKB"/>
</dbReference>
<dbReference type="GO" id="GO:0042130">
    <property type="term" value="P:negative regulation of T cell proliferation"/>
    <property type="evidence" value="ECO:0000314"/>
    <property type="project" value="MGI"/>
</dbReference>
<dbReference type="GO" id="GO:1903556">
    <property type="term" value="P:negative regulation of tumor necrosis factor superfamily cytokine production"/>
    <property type="evidence" value="ECO:0007669"/>
    <property type="project" value="Ensembl"/>
</dbReference>
<dbReference type="GO" id="GO:0032689">
    <property type="term" value="P:negative regulation of type II interferon production"/>
    <property type="evidence" value="ECO:0007669"/>
    <property type="project" value="Ensembl"/>
</dbReference>
<dbReference type="GO" id="GO:1905404">
    <property type="term" value="P:positive regulation of activated CD8-positive, alpha-beta T cell apoptotic process"/>
    <property type="evidence" value="ECO:0007669"/>
    <property type="project" value="Ensembl"/>
</dbReference>
<dbReference type="GO" id="GO:0032733">
    <property type="term" value="P:positive regulation of interleukin-10 production"/>
    <property type="evidence" value="ECO:0007669"/>
    <property type="project" value="Ensembl"/>
</dbReference>
<dbReference type="GO" id="GO:0034097">
    <property type="term" value="P:response to cytokine"/>
    <property type="evidence" value="ECO:0007669"/>
    <property type="project" value="Ensembl"/>
</dbReference>
<dbReference type="GO" id="GO:0031295">
    <property type="term" value="P:T cell costimulation"/>
    <property type="evidence" value="ECO:0007669"/>
    <property type="project" value="Ensembl"/>
</dbReference>
<dbReference type="GO" id="GO:0035666">
    <property type="term" value="P:TRIF-dependent toll-like receptor signaling pathway"/>
    <property type="evidence" value="ECO:0007669"/>
    <property type="project" value="Ensembl"/>
</dbReference>
<dbReference type="CDD" id="cd20947">
    <property type="entry name" value="IgV_PDl1"/>
    <property type="match status" value="1"/>
</dbReference>
<dbReference type="FunFam" id="2.60.40.10:FF:001299">
    <property type="entry name" value="Programmed cell death 1"/>
    <property type="match status" value="1"/>
</dbReference>
<dbReference type="FunFam" id="2.60.40.10:FF:001063">
    <property type="entry name" value="Programmed cell death ligand 1"/>
    <property type="match status" value="1"/>
</dbReference>
<dbReference type="Gene3D" id="2.60.40.10">
    <property type="entry name" value="Immunoglobulins"/>
    <property type="match status" value="2"/>
</dbReference>
<dbReference type="InterPro" id="IPR013162">
    <property type="entry name" value="CD80_C2-set"/>
</dbReference>
<dbReference type="InterPro" id="IPR007110">
    <property type="entry name" value="Ig-like_dom"/>
</dbReference>
<dbReference type="InterPro" id="IPR036179">
    <property type="entry name" value="Ig-like_dom_sf"/>
</dbReference>
<dbReference type="InterPro" id="IPR013783">
    <property type="entry name" value="Ig-like_fold"/>
</dbReference>
<dbReference type="InterPro" id="IPR003599">
    <property type="entry name" value="Ig_sub"/>
</dbReference>
<dbReference type="InterPro" id="IPR013106">
    <property type="entry name" value="Ig_V-set"/>
</dbReference>
<dbReference type="InterPro" id="IPR051713">
    <property type="entry name" value="T-cell_Activation_Regulation"/>
</dbReference>
<dbReference type="PANTHER" id="PTHR25466:SF3">
    <property type="entry name" value="PROGRAMMED CELL DEATH 1 LIGAND 1"/>
    <property type="match status" value="1"/>
</dbReference>
<dbReference type="PANTHER" id="PTHR25466">
    <property type="entry name" value="T-LYMPHOCYTE ACTIVATION ANTIGEN"/>
    <property type="match status" value="1"/>
</dbReference>
<dbReference type="Pfam" id="PF08205">
    <property type="entry name" value="C2-set_2"/>
    <property type="match status" value="1"/>
</dbReference>
<dbReference type="Pfam" id="PF07686">
    <property type="entry name" value="V-set"/>
    <property type="match status" value="1"/>
</dbReference>
<dbReference type="SMART" id="SM00409">
    <property type="entry name" value="IG"/>
    <property type="match status" value="2"/>
</dbReference>
<dbReference type="SUPFAM" id="SSF48726">
    <property type="entry name" value="Immunoglobulin"/>
    <property type="match status" value="2"/>
</dbReference>
<dbReference type="PROSITE" id="PS50835">
    <property type="entry name" value="IG_LIKE"/>
    <property type="match status" value="2"/>
</dbReference>